<comment type="function">
    <text evidence="1">The RuvA-RuvB-RuvC complex processes Holliday junction (HJ) DNA during genetic recombination and DNA repair, while the RuvA-RuvB complex plays an important role in the rescue of blocked DNA replication forks via replication fork reversal (RFR). RuvA specifically binds to HJ cruciform DNA, conferring on it an open structure. The RuvB hexamer acts as an ATP-dependent pump, pulling dsDNA into and through the RuvAB complex. HJ branch migration allows RuvC to scan DNA until it finds its consensus sequence, where it cleaves and resolves the cruciform DNA.</text>
</comment>
<comment type="subunit">
    <text evidence="1">Homotetramer. Forms an RuvA(8)-RuvB(12)-Holliday junction (HJ) complex. HJ DNA is sandwiched between 2 RuvA tetramers; dsDNA enters through RuvA and exits via RuvB. An RuvB hexamer assembles on each DNA strand where it exits the tetramer. Each RuvB hexamer is contacted by two RuvA subunits (via domain III) on 2 adjacent RuvB subunits; this complex drives branch migration. In the full resolvosome a probable DNA-RuvA(4)-RuvB(12)-RuvC(2) complex forms which resolves the HJ.</text>
</comment>
<comment type="subcellular location">
    <subcellularLocation>
        <location evidence="1">Cytoplasm</location>
    </subcellularLocation>
</comment>
<comment type="domain">
    <text evidence="1">Has three domains with a flexible linker between the domains II and III and assumes an 'L' shape. Domain III is highly mobile and contacts RuvB.</text>
</comment>
<comment type="similarity">
    <text evidence="1">Belongs to the RuvA family.</text>
</comment>
<accession>B0BXC2</accession>
<gene>
    <name evidence="1" type="primary">ruvA</name>
    <name type="ordered locus">RrIowa_0634</name>
</gene>
<evidence type="ECO:0000255" key="1">
    <source>
        <dbReference type="HAMAP-Rule" id="MF_00031"/>
    </source>
</evidence>
<sequence>MIGKLSGKVDSQGDDYVIIDVNGVGYLVYASGKTLGTLAEGEFYKLFIETHVREEHIHLYGFLTLEEKIFFNLLQSVNGIGTRMALFILSSLTPSDIQIAVNNEDKNIFKAISGVGAKLAERIVLELKGKVAKISSGSAIIKESLNIKNITPVASNEVIKALVNLGFSRFEAQNAVQGIITQNPEISIDELIKTALKNRNSNFS</sequence>
<proteinExistence type="inferred from homology"/>
<name>RUVA_RICRO</name>
<reference key="1">
    <citation type="journal article" date="2008" name="Infect. Immun.">
        <title>Genomic comparison of virulent Rickettsia rickettsii Sheila Smith and avirulent Rickettsia rickettsii Iowa.</title>
        <authorList>
            <person name="Ellison D.W."/>
            <person name="Clark T.R."/>
            <person name="Sturdevant D.E."/>
            <person name="Virtaneva K."/>
            <person name="Porcella S.F."/>
            <person name="Hackstadt T."/>
        </authorList>
    </citation>
    <scope>NUCLEOTIDE SEQUENCE [LARGE SCALE GENOMIC DNA]</scope>
    <source>
        <strain>Iowa</strain>
    </source>
</reference>
<keyword id="KW-0963">Cytoplasm</keyword>
<keyword id="KW-0227">DNA damage</keyword>
<keyword id="KW-0233">DNA recombination</keyword>
<keyword id="KW-0234">DNA repair</keyword>
<keyword id="KW-0238">DNA-binding</keyword>
<feature type="chain" id="PRO_1000074432" description="Holliday junction branch migration complex subunit RuvA">
    <location>
        <begin position="1"/>
        <end position="204"/>
    </location>
</feature>
<feature type="region of interest" description="Domain I" evidence="1">
    <location>
        <begin position="1"/>
        <end position="63"/>
    </location>
</feature>
<feature type="region of interest" description="Domain II" evidence="1">
    <location>
        <begin position="64"/>
        <end position="142"/>
    </location>
</feature>
<feature type="region of interest" description="Flexible linker" evidence="1">
    <location>
        <begin position="143"/>
        <end position="149"/>
    </location>
</feature>
<feature type="region of interest" description="Domain III" evidence="1">
    <location>
        <begin position="150"/>
        <end position="204"/>
    </location>
</feature>
<dbReference type="EMBL" id="CP000766">
    <property type="protein sequence ID" value="ABY72498.1"/>
    <property type="molecule type" value="Genomic_DNA"/>
</dbReference>
<dbReference type="RefSeq" id="WP_012150729.1">
    <property type="nucleotide sequence ID" value="NC_010263.3"/>
</dbReference>
<dbReference type="SMR" id="B0BXC2"/>
<dbReference type="GeneID" id="79937286"/>
<dbReference type="KEGG" id="rrj:RrIowa_0634"/>
<dbReference type="eggNOG" id="COG0632">
    <property type="taxonomic scope" value="Bacteria"/>
</dbReference>
<dbReference type="HOGENOM" id="CLU_087936_3_0_5"/>
<dbReference type="Proteomes" id="UP000000796">
    <property type="component" value="Chromosome"/>
</dbReference>
<dbReference type="GO" id="GO:0005737">
    <property type="term" value="C:cytoplasm"/>
    <property type="evidence" value="ECO:0007669"/>
    <property type="project" value="UniProtKB-SubCell"/>
</dbReference>
<dbReference type="GO" id="GO:0009379">
    <property type="term" value="C:Holliday junction helicase complex"/>
    <property type="evidence" value="ECO:0007669"/>
    <property type="project" value="InterPro"/>
</dbReference>
<dbReference type="GO" id="GO:0048476">
    <property type="term" value="C:Holliday junction resolvase complex"/>
    <property type="evidence" value="ECO:0007669"/>
    <property type="project" value="UniProtKB-UniRule"/>
</dbReference>
<dbReference type="GO" id="GO:0005524">
    <property type="term" value="F:ATP binding"/>
    <property type="evidence" value="ECO:0007669"/>
    <property type="project" value="InterPro"/>
</dbReference>
<dbReference type="GO" id="GO:0000400">
    <property type="term" value="F:four-way junction DNA binding"/>
    <property type="evidence" value="ECO:0007669"/>
    <property type="project" value="UniProtKB-UniRule"/>
</dbReference>
<dbReference type="GO" id="GO:0009378">
    <property type="term" value="F:four-way junction helicase activity"/>
    <property type="evidence" value="ECO:0007669"/>
    <property type="project" value="InterPro"/>
</dbReference>
<dbReference type="GO" id="GO:0006310">
    <property type="term" value="P:DNA recombination"/>
    <property type="evidence" value="ECO:0007669"/>
    <property type="project" value="UniProtKB-UniRule"/>
</dbReference>
<dbReference type="GO" id="GO:0006281">
    <property type="term" value="P:DNA repair"/>
    <property type="evidence" value="ECO:0007669"/>
    <property type="project" value="UniProtKB-UniRule"/>
</dbReference>
<dbReference type="CDD" id="cd14332">
    <property type="entry name" value="UBA_RuvA_C"/>
    <property type="match status" value="1"/>
</dbReference>
<dbReference type="Gene3D" id="1.10.150.20">
    <property type="entry name" value="5' to 3' exonuclease, C-terminal subdomain"/>
    <property type="match status" value="1"/>
</dbReference>
<dbReference type="Gene3D" id="1.10.8.10">
    <property type="entry name" value="DNA helicase RuvA subunit, C-terminal domain"/>
    <property type="match status" value="1"/>
</dbReference>
<dbReference type="Gene3D" id="2.40.50.140">
    <property type="entry name" value="Nucleic acid-binding proteins"/>
    <property type="match status" value="1"/>
</dbReference>
<dbReference type="HAMAP" id="MF_00031">
    <property type="entry name" value="DNA_HJ_migration_RuvA"/>
    <property type="match status" value="1"/>
</dbReference>
<dbReference type="InterPro" id="IPR013849">
    <property type="entry name" value="DNA_helicase_Holl-junc_RuvA_I"/>
</dbReference>
<dbReference type="InterPro" id="IPR012340">
    <property type="entry name" value="NA-bd_OB-fold"/>
</dbReference>
<dbReference type="InterPro" id="IPR000085">
    <property type="entry name" value="RuvA"/>
</dbReference>
<dbReference type="InterPro" id="IPR010994">
    <property type="entry name" value="RuvA_2-like"/>
</dbReference>
<dbReference type="InterPro" id="IPR011114">
    <property type="entry name" value="RuvA_C"/>
</dbReference>
<dbReference type="InterPro" id="IPR036267">
    <property type="entry name" value="RuvA_C_sf"/>
</dbReference>
<dbReference type="NCBIfam" id="TIGR00084">
    <property type="entry name" value="ruvA"/>
    <property type="match status" value="1"/>
</dbReference>
<dbReference type="Pfam" id="PF14520">
    <property type="entry name" value="HHH_5"/>
    <property type="match status" value="1"/>
</dbReference>
<dbReference type="Pfam" id="PF07499">
    <property type="entry name" value="RuvA_C"/>
    <property type="match status" value="1"/>
</dbReference>
<dbReference type="Pfam" id="PF01330">
    <property type="entry name" value="RuvA_N"/>
    <property type="match status" value="1"/>
</dbReference>
<dbReference type="SUPFAM" id="SSF46929">
    <property type="entry name" value="DNA helicase RuvA subunit, C-terminal domain"/>
    <property type="match status" value="1"/>
</dbReference>
<dbReference type="SUPFAM" id="SSF50249">
    <property type="entry name" value="Nucleic acid-binding proteins"/>
    <property type="match status" value="1"/>
</dbReference>
<dbReference type="SUPFAM" id="SSF47781">
    <property type="entry name" value="RuvA domain 2-like"/>
    <property type="match status" value="1"/>
</dbReference>
<organism>
    <name type="scientific">Rickettsia rickettsii (strain Iowa)</name>
    <dbReference type="NCBI Taxonomy" id="452659"/>
    <lineage>
        <taxon>Bacteria</taxon>
        <taxon>Pseudomonadati</taxon>
        <taxon>Pseudomonadota</taxon>
        <taxon>Alphaproteobacteria</taxon>
        <taxon>Rickettsiales</taxon>
        <taxon>Rickettsiaceae</taxon>
        <taxon>Rickettsieae</taxon>
        <taxon>Rickettsia</taxon>
        <taxon>spotted fever group</taxon>
    </lineage>
</organism>
<protein>
    <recommendedName>
        <fullName evidence="1">Holliday junction branch migration complex subunit RuvA</fullName>
    </recommendedName>
</protein>